<accession>A5WFD7</accession>
<reference key="1">
    <citation type="submission" date="2007-05" db="EMBL/GenBank/DDBJ databases">
        <title>Complete sequence of chromosome of Psychrobacter sp. PRwf-1.</title>
        <authorList>
            <consortium name="US DOE Joint Genome Institute"/>
            <person name="Copeland A."/>
            <person name="Lucas S."/>
            <person name="Lapidus A."/>
            <person name="Barry K."/>
            <person name="Detter J.C."/>
            <person name="Glavina del Rio T."/>
            <person name="Hammon N."/>
            <person name="Israni S."/>
            <person name="Dalin E."/>
            <person name="Tice H."/>
            <person name="Pitluck S."/>
            <person name="Chain P."/>
            <person name="Malfatti S."/>
            <person name="Shin M."/>
            <person name="Vergez L."/>
            <person name="Schmutz J."/>
            <person name="Larimer F."/>
            <person name="Land M."/>
            <person name="Hauser L."/>
            <person name="Kyrpides N."/>
            <person name="Kim E."/>
            <person name="Tiedje J."/>
            <person name="Richardson P."/>
        </authorList>
    </citation>
    <scope>NUCLEOTIDE SEQUENCE [LARGE SCALE GENOMIC DNA]</scope>
    <source>
        <strain>PRwf-1</strain>
    </source>
</reference>
<name>RUVC_PSYWF</name>
<keyword id="KW-0963">Cytoplasm</keyword>
<keyword id="KW-0227">DNA damage</keyword>
<keyword id="KW-0233">DNA recombination</keyword>
<keyword id="KW-0234">DNA repair</keyword>
<keyword id="KW-0238">DNA-binding</keyword>
<keyword id="KW-0255">Endonuclease</keyword>
<keyword id="KW-0378">Hydrolase</keyword>
<keyword id="KW-0460">Magnesium</keyword>
<keyword id="KW-0479">Metal-binding</keyword>
<keyword id="KW-0540">Nuclease</keyword>
<dbReference type="EC" id="3.1.21.10" evidence="1"/>
<dbReference type="EMBL" id="CP000713">
    <property type="protein sequence ID" value="ABQ94378.1"/>
    <property type="molecule type" value="Genomic_DNA"/>
</dbReference>
<dbReference type="SMR" id="A5WFD7"/>
<dbReference type="STRING" id="349106.PsycPRwf_1433"/>
<dbReference type="KEGG" id="prw:PsycPRwf_1433"/>
<dbReference type="eggNOG" id="COG0817">
    <property type="taxonomic scope" value="Bacteria"/>
</dbReference>
<dbReference type="HOGENOM" id="CLU_091257_2_1_6"/>
<dbReference type="GO" id="GO:0005737">
    <property type="term" value="C:cytoplasm"/>
    <property type="evidence" value="ECO:0007669"/>
    <property type="project" value="UniProtKB-SubCell"/>
</dbReference>
<dbReference type="GO" id="GO:0048476">
    <property type="term" value="C:Holliday junction resolvase complex"/>
    <property type="evidence" value="ECO:0007669"/>
    <property type="project" value="UniProtKB-UniRule"/>
</dbReference>
<dbReference type="GO" id="GO:0008821">
    <property type="term" value="F:crossover junction DNA endonuclease activity"/>
    <property type="evidence" value="ECO:0007669"/>
    <property type="project" value="UniProtKB-UniRule"/>
</dbReference>
<dbReference type="GO" id="GO:0003677">
    <property type="term" value="F:DNA binding"/>
    <property type="evidence" value="ECO:0007669"/>
    <property type="project" value="UniProtKB-KW"/>
</dbReference>
<dbReference type="GO" id="GO:0000287">
    <property type="term" value="F:magnesium ion binding"/>
    <property type="evidence" value="ECO:0007669"/>
    <property type="project" value="UniProtKB-UniRule"/>
</dbReference>
<dbReference type="GO" id="GO:0006310">
    <property type="term" value="P:DNA recombination"/>
    <property type="evidence" value="ECO:0007669"/>
    <property type="project" value="UniProtKB-UniRule"/>
</dbReference>
<dbReference type="GO" id="GO:0006281">
    <property type="term" value="P:DNA repair"/>
    <property type="evidence" value="ECO:0007669"/>
    <property type="project" value="UniProtKB-UniRule"/>
</dbReference>
<dbReference type="CDD" id="cd16962">
    <property type="entry name" value="RuvC"/>
    <property type="match status" value="1"/>
</dbReference>
<dbReference type="FunFam" id="3.30.420.10:FF:000002">
    <property type="entry name" value="Crossover junction endodeoxyribonuclease RuvC"/>
    <property type="match status" value="1"/>
</dbReference>
<dbReference type="Gene3D" id="3.30.420.10">
    <property type="entry name" value="Ribonuclease H-like superfamily/Ribonuclease H"/>
    <property type="match status" value="1"/>
</dbReference>
<dbReference type="HAMAP" id="MF_00034">
    <property type="entry name" value="RuvC"/>
    <property type="match status" value="1"/>
</dbReference>
<dbReference type="InterPro" id="IPR012337">
    <property type="entry name" value="RNaseH-like_sf"/>
</dbReference>
<dbReference type="InterPro" id="IPR036397">
    <property type="entry name" value="RNaseH_sf"/>
</dbReference>
<dbReference type="InterPro" id="IPR020563">
    <property type="entry name" value="X-over_junc_endoDNase_Mg_BS"/>
</dbReference>
<dbReference type="InterPro" id="IPR002176">
    <property type="entry name" value="X-over_junc_endoDNase_RuvC"/>
</dbReference>
<dbReference type="NCBIfam" id="TIGR00228">
    <property type="entry name" value="ruvC"/>
    <property type="match status" value="1"/>
</dbReference>
<dbReference type="PANTHER" id="PTHR30194">
    <property type="entry name" value="CROSSOVER JUNCTION ENDODEOXYRIBONUCLEASE RUVC"/>
    <property type="match status" value="1"/>
</dbReference>
<dbReference type="PANTHER" id="PTHR30194:SF3">
    <property type="entry name" value="CROSSOVER JUNCTION ENDODEOXYRIBONUCLEASE RUVC"/>
    <property type="match status" value="1"/>
</dbReference>
<dbReference type="Pfam" id="PF02075">
    <property type="entry name" value="RuvC"/>
    <property type="match status" value="1"/>
</dbReference>
<dbReference type="PRINTS" id="PR00696">
    <property type="entry name" value="RSOLVASERUVC"/>
</dbReference>
<dbReference type="SUPFAM" id="SSF53098">
    <property type="entry name" value="Ribonuclease H-like"/>
    <property type="match status" value="1"/>
</dbReference>
<dbReference type="PROSITE" id="PS01321">
    <property type="entry name" value="RUVC"/>
    <property type="match status" value="1"/>
</dbReference>
<gene>
    <name evidence="1" type="primary">ruvC</name>
    <name type="ordered locus">PsycPRwf_1433</name>
</gene>
<proteinExistence type="inferred from homology"/>
<organism>
    <name type="scientific">Psychrobacter sp. (strain PRwf-1)</name>
    <dbReference type="NCBI Taxonomy" id="349106"/>
    <lineage>
        <taxon>Bacteria</taxon>
        <taxon>Pseudomonadati</taxon>
        <taxon>Pseudomonadota</taxon>
        <taxon>Gammaproteobacteria</taxon>
        <taxon>Moraxellales</taxon>
        <taxon>Moraxellaceae</taxon>
        <taxon>Psychrobacter</taxon>
    </lineage>
</organism>
<feature type="chain" id="PRO_1000071034" description="Crossover junction endodeoxyribonuclease RuvC">
    <location>
        <begin position="1"/>
        <end position="194"/>
    </location>
</feature>
<feature type="active site" evidence="1">
    <location>
        <position position="8"/>
    </location>
</feature>
<feature type="active site" evidence="1">
    <location>
        <position position="72"/>
    </location>
</feature>
<feature type="active site" evidence="1">
    <location>
        <position position="144"/>
    </location>
</feature>
<feature type="binding site" evidence="1">
    <location>
        <position position="8"/>
    </location>
    <ligand>
        <name>Mg(2+)</name>
        <dbReference type="ChEBI" id="CHEBI:18420"/>
        <label>1</label>
    </ligand>
</feature>
<feature type="binding site" evidence="1">
    <location>
        <position position="72"/>
    </location>
    <ligand>
        <name>Mg(2+)</name>
        <dbReference type="ChEBI" id="CHEBI:18420"/>
        <label>2</label>
    </ligand>
</feature>
<feature type="binding site" evidence="1">
    <location>
        <position position="144"/>
    </location>
    <ligand>
        <name>Mg(2+)</name>
        <dbReference type="ChEBI" id="CHEBI:18420"/>
        <label>1</label>
    </ligand>
</feature>
<sequence length="194" mass="21384">MAIIIGIDPGSRMTGYGIIHQKGDTLRYLDAGTIRTDTKEMPERLKRIFQGLTRITQYHLKYSDEPIHAAVEQVFMAENPDSALKLGQARGAAIAALVALDLEVSEYTARQIKQSVCGYGAADKVQVQEMVCRILKLDVTPQQDAADGLACAICHAHSSHSMNKLLMNSTLRGRGTSKKKGRWRLTEEDLASLK</sequence>
<comment type="function">
    <text evidence="1">The RuvA-RuvB-RuvC complex processes Holliday junction (HJ) DNA during genetic recombination and DNA repair. Endonuclease that resolves HJ intermediates. Cleaves cruciform DNA by making single-stranded nicks across the HJ at symmetrical positions within the homologous arms, yielding a 5'-phosphate and a 3'-hydroxyl group; requires a central core of homology in the junction. The consensus cleavage sequence is 5'-(A/T)TT(C/G)-3'. Cleavage occurs on the 3'-side of the TT dinucleotide at the point of strand exchange. HJ branch migration catalyzed by RuvA-RuvB allows RuvC to scan DNA until it finds its consensus sequence, where it cleaves and resolves the cruciform DNA.</text>
</comment>
<comment type="catalytic activity">
    <reaction evidence="1">
        <text>Endonucleolytic cleavage at a junction such as a reciprocal single-stranded crossover between two homologous DNA duplexes (Holliday junction).</text>
        <dbReference type="EC" id="3.1.21.10"/>
    </reaction>
</comment>
<comment type="cofactor">
    <cofactor evidence="1">
        <name>Mg(2+)</name>
        <dbReference type="ChEBI" id="CHEBI:18420"/>
    </cofactor>
    <text evidence="1">Binds 2 Mg(2+) ion per subunit.</text>
</comment>
<comment type="subunit">
    <text evidence="1">Homodimer which binds Holliday junction (HJ) DNA. The HJ becomes 2-fold symmetrical on binding to RuvC with unstacked arms; it has a different conformation from HJ DNA in complex with RuvA. In the full resolvosome a probable DNA-RuvA(4)-RuvB(12)-RuvC(2) complex forms which resolves the HJ.</text>
</comment>
<comment type="subcellular location">
    <subcellularLocation>
        <location evidence="1">Cytoplasm</location>
    </subcellularLocation>
</comment>
<comment type="similarity">
    <text evidence="1">Belongs to the RuvC family.</text>
</comment>
<protein>
    <recommendedName>
        <fullName evidence="1">Crossover junction endodeoxyribonuclease RuvC</fullName>
        <ecNumber evidence="1">3.1.21.10</ecNumber>
    </recommendedName>
    <alternativeName>
        <fullName evidence="1">Holliday junction nuclease RuvC</fullName>
    </alternativeName>
    <alternativeName>
        <fullName evidence="1">Holliday junction resolvase RuvC</fullName>
    </alternativeName>
</protein>
<evidence type="ECO:0000255" key="1">
    <source>
        <dbReference type="HAMAP-Rule" id="MF_00034"/>
    </source>
</evidence>